<gene>
    <name evidence="1" type="primary">aroQ</name>
    <name type="ordered locus">Dtur_1456</name>
</gene>
<feature type="chain" id="PRO_1000118277" description="3-dehydroquinate dehydratase">
    <location>
        <begin position="1"/>
        <end position="145"/>
    </location>
</feature>
<feature type="active site" description="Proton acceptor" evidence="1">
    <location>
        <position position="23"/>
    </location>
</feature>
<feature type="active site" description="Proton donor" evidence="1">
    <location>
        <position position="100"/>
    </location>
</feature>
<feature type="binding site" evidence="1">
    <location>
        <position position="74"/>
    </location>
    <ligand>
        <name>substrate</name>
    </ligand>
</feature>
<feature type="binding site" evidence="1">
    <location>
        <position position="80"/>
    </location>
    <ligand>
        <name>substrate</name>
    </ligand>
</feature>
<feature type="binding site" evidence="1">
    <location>
        <position position="87"/>
    </location>
    <ligand>
        <name>substrate</name>
    </ligand>
</feature>
<feature type="binding site" evidence="1">
    <location>
        <begin position="101"/>
        <end position="102"/>
    </location>
    <ligand>
        <name>substrate</name>
    </ligand>
</feature>
<feature type="binding site" evidence="1">
    <location>
        <position position="111"/>
    </location>
    <ligand>
        <name>substrate</name>
    </ligand>
</feature>
<feature type="site" description="Transition state stabilizer" evidence="1">
    <location>
        <position position="18"/>
    </location>
</feature>
<reference key="1">
    <citation type="journal article" date="2016" name="Front. Microbiol.">
        <title>The complete genome sequence of hyperthermophile Dictyoglomus turgidum DSM 6724 reveals a specialized carbohydrate fermentor.</title>
        <authorList>
            <person name="Brumm P.J."/>
            <person name="Gowda K."/>
            <person name="Robb F.T."/>
            <person name="Mead D.A."/>
        </authorList>
    </citation>
    <scope>NUCLEOTIDE SEQUENCE [LARGE SCALE GENOMIC DNA]</scope>
    <source>
        <strain>DSM 6724 / Z-1310</strain>
    </source>
</reference>
<organism>
    <name type="scientific">Dictyoglomus turgidum (strain DSM 6724 / Z-1310)</name>
    <dbReference type="NCBI Taxonomy" id="515635"/>
    <lineage>
        <taxon>Bacteria</taxon>
        <taxon>Pseudomonadati</taxon>
        <taxon>Dictyoglomota</taxon>
        <taxon>Dictyoglomia</taxon>
        <taxon>Dictyoglomales</taxon>
        <taxon>Dictyoglomaceae</taxon>
        <taxon>Dictyoglomus</taxon>
    </lineage>
</organism>
<dbReference type="EC" id="4.2.1.10" evidence="1"/>
<dbReference type="EMBL" id="CP001251">
    <property type="protein sequence ID" value="ACK42730.1"/>
    <property type="molecule type" value="Genomic_DNA"/>
</dbReference>
<dbReference type="RefSeq" id="WP_012583808.1">
    <property type="nucleotide sequence ID" value="NC_011661.1"/>
</dbReference>
<dbReference type="RefSeq" id="YP_002353344.1">
    <property type="nucleotide sequence ID" value="NC_011661.1"/>
</dbReference>
<dbReference type="SMR" id="B8E0Z3"/>
<dbReference type="FunCoup" id="B8E0Z3">
    <property type="interactions" value="173"/>
</dbReference>
<dbReference type="STRING" id="515635.Dtur_1456"/>
<dbReference type="EnsemblBacteria" id="ACK42730">
    <property type="protein sequence ID" value="ACK42730"/>
    <property type="gene ID" value="Dtur_1456"/>
</dbReference>
<dbReference type="KEGG" id="dtu:Dtur_1456"/>
<dbReference type="PATRIC" id="fig|515635.4.peg.1506"/>
<dbReference type="eggNOG" id="COG0757">
    <property type="taxonomic scope" value="Bacteria"/>
</dbReference>
<dbReference type="HOGENOM" id="CLU_090968_1_0_0"/>
<dbReference type="InParanoid" id="B8E0Z3"/>
<dbReference type="OrthoDB" id="9790793at2"/>
<dbReference type="UniPathway" id="UPA00053">
    <property type="reaction ID" value="UER00086"/>
</dbReference>
<dbReference type="Proteomes" id="UP000007719">
    <property type="component" value="Chromosome"/>
</dbReference>
<dbReference type="GO" id="GO:0003855">
    <property type="term" value="F:3-dehydroquinate dehydratase activity"/>
    <property type="evidence" value="ECO:0000318"/>
    <property type="project" value="GO_Central"/>
</dbReference>
<dbReference type="GO" id="GO:0008652">
    <property type="term" value="P:amino acid biosynthetic process"/>
    <property type="evidence" value="ECO:0007669"/>
    <property type="project" value="UniProtKB-KW"/>
</dbReference>
<dbReference type="GO" id="GO:0009073">
    <property type="term" value="P:aromatic amino acid family biosynthetic process"/>
    <property type="evidence" value="ECO:0007669"/>
    <property type="project" value="UniProtKB-KW"/>
</dbReference>
<dbReference type="GO" id="GO:0009423">
    <property type="term" value="P:chorismate biosynthetic process"/>
    <property type="evidence" value="ECO:0007669"/>
    <property type="project" value="UniProtKB-UniRule"/>
</dbReference>
<dbReference type="GO" id="GO:0019631">
    <property type="term" value="P:quinate catabolic process"/>
    <property type="evidence" value="ECO:0000318"/>
    <property type="project" value="GO_Central"/>
</dbReference>
<dbReference type="CDD" id="cd00466">
    <property type="entry name" value="DHQase_II"/>
    <property type="match status" value="1"/>
</dbReference>
<dbReference type="Gene3D" id="3.40.50.9100">
    <property type="entry name" value="Dehydroquinase, class II"/>
    <property type="match status" value="1"/>
</dbReference>
<dbReference type="HAMAP" id="MF_00169">
    <property type="entry name" value="AroQ"/>
    <property type="match status" value="1"/>
</dbReference>
<dbReference type="InterPro" id="IPR001874">
    <property type="entry name" value="DHquinase_II"/>
</dbReference>
<dbReference type="InterPro" id="IPR018509">
    <property type="entry name" value="DHquinase_II_CS"/>
</dbReference>
<dbReference type="InterPro" id="IPR036441">
    <property type="entry name" value="DHquinase_II_sf"/>
</dbReference>
<dbReference type="NCBIfam" id="TIGR01088">
    <property type="entry name" value="aroQ"/>
    <property type="match status" value="1"/>
</dbReference>
<dbReference type="NCBIfam" id="NF003805">
    <property type="entry name" value="PRK05395.1-2"/>
    <property type="match status" value="1"/>
</dbReference>
<dbReference type="NCBIfam" id="NF003806">
    <property type="entry name" value="PRK05395.1-3"/>
    <property type="match status" value="1"/>
</dbReference>
<dbReference type="NCBIfam" id="NF003807">
    <property type="entry name" value="PRK05395.1-4"/>
    <property type="match status" value="1"/>
</dbReference>
<dbReference type="PANTHER" id="PTHR21272">
    <property type="entry name" value="CATABOLIC 3-DEHYDROQUINASE"/>
    <property type="match status" value="1"/>
</dbReference>
<dbReference type="PANTHER" id="PTHR21272:SF3">
    <property type="entry name" value="CATABOLIC 3-DEHYDROQUINASE"/>
    <property type="match status" value="1"/>
</dbReference>
<dbReference type="Pfam" id="PF01220">
    <property type="entry name" value="DHquinase_II"/>
    <property type="match status" value="1"/>
</dbReference>
<dbReference type="PIRSF" id="PIRSF001399">
    <property type="entry name" value="DHquinase_II"/>
    <property type="match status" value="1"/>
</dbReference>
<dbReference type="SUPFAM" id="SSF52304">
    <property type="entry name" value="Type II 3-dehydroquinate dehydratase"/>
    <property type="match status" value="1"/>
</dbReference>
<dbReference type="PROSITE" id="PS01029">
    <property type="entry name" value="DEHYDROQUINASE_II"/>
    <property type="match status" value="1"/>
</dbReference>
<evidence type="ECO:0000255" key="1">
    <source>
        <dbReference type="HAMAP-Rule" id="MF_00169"/>
    </source>
</evidence>
<accession>B8E0Z3</accession>
<sequence length="145" mass="16636">MIKVLVLHGPNLNLLGVREPNIYGRVDFQTLNNLILQKAKEREIEVEIKQSNFEGQLIDWIQEYRDWADAIIINPGALTHYSYSLRDALLAFGKPVIEVHISNIYKREEFRHHSVIAPVALGQISGFGVNSYLLALEAIFLYFNK</sequence>
<comment type="function">
    <text evidence="1">Catalyzes a trans-dehydration via an enolate intermediate.</text>
</comment>
<comment type="catalytic activity">
    <reaction evidence="1">
        <text>3-dehydroquinate = 3-dehydroshikimate + H2O</text>
        <dbReference type="Rhea" id="RHEA:21096"/>
        <dbReference type="ChEBI" id="CHEBI:15377"/>
        <dbReference type="ChEBI" id="CHEBI:16630"/>
        <dbReference type="ChEBI" id="CHEBI:32364"/>
        <dbReference type="EC" id="4.2.1.10"/>
    </reaction>
</comment>
<comment type="pathway">
    <text evidence="1">Metabolic intermediate biosynthesis; chorismate biosynthesis; chorismate from D-erythrose 4-phosphate and phosphoenolpyruvate: step 3/7.</text>
</comment>
<comment type="subunit">
    <text evidence="1">Homododecamer.</text>
</comment>
<comment type="similarity">
    <text evidence="1">Belongs to the type-II 3-dehydroquinase family.</text>
</comment>
<proteinExistence type="inferred from homology"/>
<protein>
    <recommendedName>
        <fullName evidence="1">3-dehydroquinate dehydratase</fullName>
        <shortName evidence="1">3-dehydroquinase</shortName>
        <ecNumber evidence="1">4.2.1.10</ecNumber>
    </recommendedName>
    <alternativeName>
        <fullName evidence="1">Type II DHQase</fullName>
    </alternativeName>
</protein>
<name>AROQ_DICTD</name>
<keyword id="KW-0028">Amino-acid biosynthesis</keyword>
<keyword id="KW-0057">Aromatic amino acid biosynthesis</keyword>
<keyword id="KW-0456">Lyase</keyword>
<keyword id="KW-1185">Reference proteome</keyword>